<dbReference type="EC" id="6.3.5.7" evidence="1"/>
<dbReference type="EMBL" id="AM406670">
    <property type="protein sequence ID" value="CAL92790.1"/>
    <property type="molecule type" value="Genomic_DNA"/>
</dbReference>
<dbReference type="RefSeq" id="WP_011763908.1">
    <property type="nucleotide sequence ID" value="NC_008702.1"/>
</dbReference>
<dbReference type="SMR" id="A1K1T5"/>
<dbReference type="STRING" id="62928.azo0172"/>
<dbReference type="KEGG" id="aoa:dqs_0181"/>
<dbReference type="KEGG" id="azo:azo0172"/>
<dbReference type="eggNOG" id="COG0154">
    <property type="taxonomic scope" value="Bacteria"/>
</dbReference>
<dbReference type="HOGENOM" id="CLU_009600_0_3_4"/>
<dbReference type="OrthoDB" id="9811471at2"/>
<dbReference type="Proteomes" id="UP000002588">
    <property type="component" value="Chromosome"/>
</dbReference>
<dbReference type="GO" id="GO:0030956">
    <property type="term" value="C:glutamyl-tRNA(Gln) amidotransferase complex"/>
    <property type="evidence" value="ECO:0007669"/>
    <property type="project" value="InterPro"/>
</dbReference>
<dbReference type="GO" id="GO:0005524">
    <property type="term" value="F:ATP binding"/>
    <property type="evidence" value="ECO:0007669"/>
    <property type="project" value="UniProtKB-KW"/>
</dbReference>
<dbReference type="GO" id="GO:0050567">
    <property type="term" value="F:glutaminyl-tRNA synthase (glutamine-hydrolyzing) activity"/>
    <property type="evidence" value="ECO:0007669"/>
    <property type="project" value="UniProtKB-UniRule"/>
</dbReference>
<dbReference type="GO" id="GO:0006412">
    <property type="term" value="P:translation"/>
    <property type="evidence" value="ECO:0007669"/>
    <property type="project" value="UniProtKB-UniRule"/>
</dbReference>
<dbReference type="Gene3D" id="3.90.1300.10">
    <property type="entry name" value="Amidase signature (AS) domain"/>
    <property type="match status" value="1"/>
</dbReference>
<dbReference type="HAMAP" id="MF_00120">
    <property type="entry name" value="GatA"/>
    <property type="match status" value="1"/>
</dbReference>
<dbReference type="InterPro" id="IPR000120">
    <property type="entry name" value="Amidase"/>
</dbReference>
<dbReference type="InterPro" id="IPR020556">
    <property type="entry name" value="Amidase_CS"/>
</dbReference>
<dbReference type="InterPro" id="IPR023631">
    <property type="entry name" value="Amidase_dom"/>
</dbReference>
<dbReference type="InterPro" id="IPR036928">
    <property type="entry name" value="AS_sf"/>
</dbReference>
<dbReference type="InterPro" id="IPR004412">
    <property type="entry name" value="GatA"/>
</dbReference>
<dbReference type="NCBIfam" id="TIGR00132">
    <property type="entry name" value="gatA"/>
    <property type="match status" value="1"/>
</dbReference>
<dbReference type="PANTHER" id="PTHR11895:SF151">
    <property type="entry name" value="GLUTAMYL-TRNA(GLN) AMIDOTRANSFERASE SUBUNIT A"/>
    <property type="match status" value="1"/>
</dbReference>
<dbReference type="PANTHER" id="PTHR11895">
    <property type="entry name" value="TRANSAMIDASE"/>
    <property type="match status" value="1"/>
</dbReference>
<dbReference type="Pfam" id="PF01425">
    <property type="entry name" value="Amidase"/>
    <property type="match status" value="1"/>
</dbReference>
<dbReference type="SUPFAM" id="SSF75304">
    <property type="entry name" value="Amidase signature (AS) enzymes"/>
    <property type="match status" value="1"/>
</dbReference>
<dbReference type="PROSITE" id="PS00571">
    <property type="entry name" value="AMIDASES"/>
    <property type="match status" value="1"/>
</dbReference>
<organism>
    <name type="scientific">Azoarcus sp. (strain BH72)</name>
    <dbReference type="NCBI Taxonomy" id="418699"/>
    <lineage>
        <taxon>Bacteria</taxon>
        <taxon>Pseudomonadati</taxon>
        <taxon>Pseudomonadota</taxon>
        <taxon>Betaproteobacteria</taxon>
        <taxon>Rhodocyclales</taxon>
        <taxon>Zoogloeaceae</taxon>
        <taxon>Azoarcus</taxon>
    </lineage>
</organism>
<protein>
    <recommendedName>
        <fullName evidence="1">Glutamyl-tRNA(Gln) amidotransferase subunit A</fullName>
        <shortName evidence="1">Glu-ADT subunit A</shortName>
        <ecNumber evidence="1">6.3.5.7</ecNumber>
    </recommendedName>
</protein>
<feature type="chain" id="PRO_1000015797" description="Glutamyl-tRNA(Gln) amidotransferase subunit A">
    <location>
        <begin position="1"/>
        <end position="487"/>
    </location>
</feature>
<feature type="active site" description="Charge relay system" evidence="1">
    <location>
        <position position="76"/>
    </location>
</feature>
<feature type="active site" description="Charge relay system" evidence="1">
    <location>
        <position position="151"/>
    </location>
</feature>
<feature type="active site" description="Acyl-ester intermediate" evidence="1">
    <location>
        <position position="175"/>
    </location>
</feature>
<proteinExistence type="inferred from homology"/>
<accession>A1K1T5</accession>
<reference key="1">
    <citation type="journal article" date="2006" name="Nat. Biotechnol.">
        <title>Complete genome of the mutualistic, N2-fixing grass endophyte Azoarcus sp. strain BH72.</title>
        <authorList>
            <person name="Krause A."/>
            <person name="Ramakumar A."/>
            <person name="Bartels D."/>
            <person name="Battistoni F."/>
            <person name="Bekel T."/>
            <person name="Boch J."/>
            <person name="Boehm M."/>
            <person name="Friedrich F."/>
            <person name="Hurek T."/>
            <person name="Krause L."/>
            <person name="Linke B."/>
            <person name="McHardy A.C."/>
            <person name="Sarkar A."/>
            <person name="Schneiker S."/>
            <person name="Syed A.A."/>
            <person name="Thauer R."/>
            <person name="Vorhoelter F.-J."/>
            <person name="Weidner S."/>
            <person name="Puehler A."/>
            <person name="Reinhold-Hurek B."/>
            <person name="Kaiser O."/>
            <person name="Goesmann A."/>
        </authorList>
    </citation>
    <scope>NUCLEOTIDE SEQUENCE [LARGE SCALE GENOMIC DNA]</scope>
    <source>
        <strain>BH72</strain>
    </source>
</reference>
<name>GATA_AZOSB</name>
<comment type="function">
    <text evidence="1">Allows the formation of correctly charged Gln-tRNA(Gln) through the transamidation of misacylated Glu-tRNA(Gln) in organisms which lack glutaminyl-tRNA synthetase. The reaction takes place in the presence of glutamine and ATP through an activated gamma-phospho-Glu-tRNA(Gln).</text>
</comment>
<comment type="catalytic activity">
    <reaction evidence="1">
        <text>L-glutamyl-tRNA(Gln) + L-glutamine + ATP + H2O = L-glutaminyl-tRNA(Gln) + L-glutamate + ADP + phosphate + H(+)</text>
        <dbReference type="Rhea" id="RHEA:17521"/>
        <dbReference type="Rhea" id="RHEA-COMP:9681"/>
        <dbReference type="Rhea" id="RHEA-COMP:9684"/>
        <dbReference type="ChEBI" id="CHEBI:15377"/>
        <dbReference type="ChEBI" id="CHEBI:15378"/>
        <dbReference type="ChEBI" id="CHEBI:29985"/>
        <dbReference type="ChEBI" id="CHEBI:30616"/>
        <dbReference type="ChEBI" id="CHEBI:43474"/>
        <dbReference type="ChEBI" id="CHEBI:58359"/>
        <dbReference type="ChEBI" id="CHEBI:78520"/>
        <dbReference type="ChEBI" id="CHEBI:78521"/>
        <dbReference type="ChEBI" id="CHEBI:456216"/>
        <dbReference type="EC" id="6.3.5.7"/>
    </reaction>
</comment>
<comment type="subunit">
    <text evidence="1">Heterotrimer of A, B and C subunits.</text>
</comment>
<comment type="similarity">
    <text evidence="1">Belongs to the amidase family. GatA subfamily.</text>
</comment>
<evidence type="ECO:0000255" key="1">
    <source>
        <dbReference type="HAMAP-Rule" id="MF_00120"/>
    </source>
</evidence>
<sequence>MINASVSELRRALDTRQVSSVELATLFLDRIAERNPALNAFITIDREGALAAARAADARIAAGTAGPLTGIPLAHKDLFCTEGVLTTCGSKMLADFVSPYDAHVVSRLKDAGAVSLGKTNMDEFAMGSSNESSHYGAVRNPWDTTRIPGGSSGGSAAAVAARLVPLATGSDTGGSVRQPASHTGVTGIKPTYGVVSRYGMIAYASSLDQGGAFGASAEDCALLLTAMAGFDPRDSTCLDRPAEDYAAALAPTAGGKPLAGLRIGLPREFFAEGMADDVRAAVDAALDQYRALGAVTVEVSLPNAKLAVPAYYVIAPAEASSNLSRFDGVRYGHRAAEYGDLNDMYCKSRAEGFGAEVKRRILVGTYVLSHGYYDAYYLQAQKLRRLIAQDFQAAFAQCDVIAGPTSPTTAWAIGEKADDPVQMYLSDIYTIAVNLAGLPGLSHPCGFGAGRLPVGLQLIGNYFGESRLLATAHQYQQASDWHLQRPE</sequence>
<keyword id="KW-0067">ATP-binding</keyword>
<keyword id="KW-0436">Ligase</keyword>
<keyword id="KW-0547">Nucleotide-binding</keyword>
<keyword id="KW-0648">Protein biosynthesis</keyword>
<keyword id="KW-1185">Reference proteome</keyword>
<gene>
    <name evidence="1" type="primary">gatA</name>
    <name type="ordered locus">azo0172</name>
</gene>